<dbReference type="EC" id="3.2.2.-" evidence="1"/>
<dbReference type="EMBL" id="FM211192">
    <property type="protein sequence ID" value="CAR71446.1"/>
    <property type="molecule type" value="Genomic_DNA"/>
</dbReference>
<dbReference type="SMR" id="B8ZRG8"/>
<dbReference type="KEGG" id="mlb:MLBr01351"/>
<dbReference type="HOGENOM" id="CLU_060471_3_1_11"/>
<dbReference type="Proteomes" id="UP000006900">
    <property type="component" value="Chromosome"/>
</dbReference>
<dbReference type="GO" id="GO:0003905">
    <property type="term" value="F:alkylbase DNA N-glycosylase activity"/>
    <property type="evidence" value="ECO:0007669"/>
    <property type="project" value="InterPro"/>
</dbReference>
<dbReference type="GO" id="GO:0003677">
    <property type="term" value="F:DNA binding"/>
    <property type="evidence" value="ECO:0007669"/>
    <property type="project" value="InterPro"/>
</dbReference>
<dbReference type="GO" id="GO:0006284">
    <property type="term" value="P:base-excision repair"/>
    <property type="evidence" value="ECO:0007669"/>
    <property type="project" value="InterPro"/>
</dbReference>
<dbReference type="CDD" id="cd00540">
    <property type="entry name" value="AAG"/>
    <property type="match status" value="1"/>
</dbReference>
<dbReference type="Gene3D" id="3.10.300.10">
    <property type="entry name" value="Methylpurine-DNA glycosylase (MPG)"/>
    <property type="match status" value="1"/>
</dbReference>
<dbReference type="HAMAP" id="MF_00527">
    <property type="entry name" value="3MGH"/>
    <property type="match status" value="1"/>
</dbReference>
<dbReference type="InterPro" id="IPR011034">
    <property type="entry name" value="Formyl_transferase-like_C_sf"/>
</dbReference>
<dbReference type="InterPro" id="IPR003180">
    <property type="entry name" value="MPG"/>
</dbReference>
<dbReference type="InterPro" id="IPR036995">
    <property type="entry name" value="MPG_sf"/>
</dbReference>
<dbReference type="NCBIfam" id="TIGR00567">
    <property type="entry name" value="3mg"/>
    <property type="match status" value="1"/>
</dbReference>
<dbReference type="NCBIfam" id="NF002003">
    <property type="entry name" value="PRK00802.1-3"/>
    <property type="match status" value="1"/>
</dbReference>
<dbReference type="PANTHER" id="PTHR10429">
    <property type="entry name" value="DNA-3-METHYLADENINE GLYCOSYLASE"/>
    <property type="match status" value="1"/>
</dbReference>
<dbReference type="PANTHER" id="PTHR10429:SF0">
    <property type="entry name" value="DNA-3-METHYLADENINE GLYCOSYLASE"/>
    <property type="match status" value="1"/>
</dbReference>
<dbReference type="Pfam" id="PF02245">
    <property type="entry name" value="Pur_DNA_glyco"/>
    <property type="match status" value="1"/>
</dbReference>
<dbReference type="SUPFAM" id="SSF50486">
    <property type="entry name" value="FMT C-terminal domain-like"/>
    <property type="match status" value="1"/>
</dbReference>
<evidence type="ECO:0000255" key="1">
    <source>
        <dbReference type="HAMAP-Rule" id="MF_00527"/>
    </source>
</evidence>
<organism>
    <name type="scientific">Mycobacterium leprae (strain Br4923)</name>
    <dbReference type="NCBI Taxonomy" id="561304"/>
    <lineage>
        <taxon>Bacteria</taxon>
        <taxon>Bacillati</taxon>
        <taxon>Actinomycetota</taxon>
        <taxon>Actinomycetes</taxon>
        <taxon>Mycobacteriales</taxon>
        <taxon>Mycobacteriaceae</taxon>
        <taxon>Mycobacterium</taxon>
    </lineage>
</organism>
<gene>
    <name type="ordered locus">MLBr01351</name>
</gene>
<protein>
    <recommendedName>
        <fullName evidence="1">Putative 3-methyladenine DNA glycosylase</fullName>
        <ecNumber evidence="1">3.2.2.-</ecNumber>
    </recommendedName>
</protein>
<comment type="similarity">
    <text evidence="1">Belongs to the DNA glycosylase MPG family.</text>
</comment>
<sequence>MRSPRRCKICAVSADQLVVDPVVAAHRLLGATITGRGVCAIVVEVEAYGGVPDGPWPDAAAHSYHGRNDRNAVMFGPPGRLYTYCSHGIHVCANVSCGPDGTAAAVLIRAGALENGADVARSRRGASVRTVALARGPGNLCSALGITMDDNGIDVFAADSPVTLVLNEAQEAMSGPRVGISHAADRPWRLWLPGRPEVSTYRRSPRAPAPGASD</sequence>
<accession>B8ZRG8</accession>
<feature type="chain" id="PRO_1000146270" description="Putative 3-methyladenine DNA glycosylase">
    <location>
        <begin position="1"/>
        <end position="214"/>
    </location>
</feature>
<keyword id="KW-0227">DNA damage</keyword>
<keyword id="KW-0234">DNA repair</keyword>
<keyword id="KW-0378">Hydrolase</keyword>
<name>3MGH_MYCLB</name>
<reference key="1">
    <citation type="journal article" date="2009" name="Nat. Genet.">
        <title>Comparative genomic and phylogeographic analysis of Mycobacterium leprae.</title>
        <authorList>
            <person name="Monot M."/>
            <person name="Honore N."/>
            <person name="Garnier T."/>
            <person name="Zidane N."/>
            <person name="Sherafi D."/>
            <person name="Paniz-Mondolfi A."/>
            <person name="Matsuoka M."/>
            <person name="Taylor G.M."/>
            <person name="Donoghue H.D."/>
            <person name="Bouwman A."/>
            <person name="Mays S."/>
            <person name="Watson C."/>
            <person name="Lockwood D."/>
            <person name="Khamispour A."/>
            <person name="Dowlati Y."/>
            <person name="Jianping S."/>
            <person name="Rea T.H."/>
            <person name="Vera-Cabrera L."/>
            <person name="Stefani M.M."/>
            <person name="Banu S."/>
            <person name="Macdonald M."/>
            <person name="Sapkota B.R."/>
            <person name="Spencer J.S."/>
            <person name="Thomas J."/>
            <person name="Harshman K."/>
            <person name="Singh P."/>
            <person name="Busso P."/>
            <person name="Gattiker A."/>
            <person name="Rougemont J."/>
            <person name="Brennan P.J."/>
            <person name="Cole S.T."/>
        </authorList>
    </citation>
    <scope>NUCLEOTIDE SEQUENCE [LARGE SCALE GENOMIC DNA]</scope>
    <source>
        <strain>Br4923</strain>
    </source>
</reference>
<proteinExistence type="inferred from homology"/>